<keyword id="KW-0413">Isomerase</keyword>
<keyword id="KW-0819">tRNA processing</keyword>
<accession>C0PXA5</accession>
<reference key="1">
    <citation type="journal article" date="2009" name="PLoS ONE">
        <title>Salmonella paratyphi C: genetic divergence from Salmonella choleraesuis and pathogenic convergence with Salmonella typhi.</title>
        <authorList>
            <person name="Liu W.-Q."/>
            <person name="Feng Y."/>
            <person name="Wang Y."/>
            <person name="Zou Q.-H."/>
            <person name="Chen F."/>
            <person name="Guo J.-T."/>
            <person name="Peng Y.-H."/>
            <person name="Jin Y."/>
            <person name="Li Y.-G."/>
            <person name="Hu S.-N."/>
            <person name="Johnston R.N."/>
            <person name="Liu G.-R."/>
            <person name="Liu S.-L."/>
        </authorList>
    </citation>
    <scope>NUCLEOTIDE SEQUENCE [LARGE SCALE GENOMIC DNA]</scope>
    <source>
        <strain>RKS4594</strain>
    </source>
</reference>
<organism>
    <name type="scientific">Salmonella paratyphi C (strain RKS4594)</name>
    <dbReference type="NCBI Taxonomy" id="476213"/>
    <lineage>
        <taxon>Bacteria</taxon>
        <taxon>Pseudomonadati</taxon>
        <taxon>Pseudomonadota</taxon>
        <taxon>Gammaproteobacteria</taxon>
        <taxon>Enterobacterales</taxon>
        <taxon>Enterobacteriaceae</taxon>
        <taxon>Salmonella</taxon>
    </lineage>
</organism>
<dbReference type="EC" id="5.4.99.27" evidence="1"/>
<dbReference type="EMBL" id="CP000857">
    <property type="protein sequence ID" value="ACN47063.1"/>
    <property type="molecule type" value="Genomic_DNA"/>
</dbReference>
<dbReference type="RefSeq" id="WP_000134246.1">
    <property type="nucleotide sequence ID" value="NC_012125.1"/>
</dbReference>
<dbReference type="SMR" id="C0PXA5"/>
<dbReference type="KEGG" id="sei:SPC_2971"/>
<dbReference type="HOGENOM" id="CLU_005281_4_0_6"/>
<dbReference type="Proteomes" id="UP000001599">
    <property type="component" value="Chromosome"/>
</dbReference>
<dbReference type="GO" id="GO:0005829">
    <property type="term" value="C:cytosol"/>
    <property type="evidence" value="ECO:0007669"/>
    <property type="project" value="TreeGrafter"/>
</dbReference>
<dbReference type="GO" id="GO:0003723">
    <property type="term" value="F:RNA binding"/>
    <property type="evidence" value="ECO:0007669"/>
    <property type="project" value="InterPro"/>
</dbReference>
<dbReference type="GO" id="GO:0160150">
    <property type="term" value="F:tRNA pseudouridine(13) synthase activity"/>
    <property type="evidence" value="ECO:0007669"/>
    <property type="project" value="UniProtKB-EC"/>
</dbReference>
<dbReference type="GO" id="GO:0031119">
    <property type="term" value="P:tRNA pseudouridine synthesis"/>
    <property type="evidence" value="ECO:0007669"/>
    <property type="project" value="UniProtKB-UniRule"/>
</dbReference>
<dbReference type="CDD" id="cd02575">
    <property type="entry name" value="PseudoU_synth_EcTruD"/>
    <property type="match status" value="1"/>
</dbReference>
<dbReference type="FunFam" id="3.30.2340.10:FF:000001">
    <property type="entry name" value="tRNA pseudouridine synthase D"/>
    <property type="match status" value="1"/>
</dbReference>
<dbReference type="FunFam" id="3.30.2350.20:FF:000001">
    <property type="entry name" value="tRNA pseudouridine synthase D"/>
    <property type="match status" value="1"/>
</dbReference>
<dbReference type="Gene3D" id="3.30.2350.20">
    <property type="entry name" value="TruD, catalytic domain"/>
    <property type="match status" value="1"/>
</dbReference>
<dbReference type="Gene3D" id="3.30.2340.10">
    <property type="entry name" value="TruD, insertion domain"/>
    <property type="match status" value="1"/>
</dbReference>
<dbReference type="HAMAP" id="MF_01082">
    <property type="entry name" value="TruD"/>
    <property type="match status" value="1"/>
</dbReference>
<dbReference type="InterPro" id="IPR020103">
    <property type="entry name" value="PsdUridine_synth_cat_dom_sf"/>
</dbReference>
<dbReference type="InterPro" id="IPR001656">
    <property type="entry name" value="PsdUridine_synth_TruD"/>
</dbReference>
<dbReference type="InterPro" id="IPR020119">
    <property type="entry name" value="PsdUridine_synth_TruD_CS"/>
</dbReference>
<dbReference type="InterPro" id="IPR011760">
    <property type="entry name" value="PsdUridine_synth_TruD_insert"/>
</dbReference>
<dbReference type="InterPro" id="IPR042214">
    <property type="entry name" value="TruD_catalytic"/>
</dbReference>
<dbReference type="InterPro" id="IPR043165">
    <property type="entry name" value="TruD_insert_sf"/>
</dbReference>
<dbReference type="InterPro" id="IPR050170">
    <property type="entry name" value="TruD_pseudoU_synthase"/>
</dbReference>
<dbReference type="NCBIfam" id="NF002155">
    <property type="entry name" value="PRK00984.1-4"/>
    <property type="match status" value="1"/>
</dbReference>
<dbReference type="NCBIfam" id="TIGR00094">
    <property type="entry name" value="tRNA_TruD_broad"/>
    <property type="match status" value="1"/>
</dbReference>
<dbReference type="PANTHER" id="PTHR47811">
    <property type="entry name" value="TRNA PSEUDOURIDINE SYNTHASE D"/>
    <property type="match status" value="1"/>
</dbReference>
<dbReference type="PANTHER" id="PTHR47811:SF1">
    <property type="entry name" value="TRNA PSEUDOURIDINE SYNTHASE D"/>
    <property type="match status" value="1"/>
</dbReference>
<dbReference type="Pfam" id="PF01142">
    <property type="entry name" value="TruD"/>
    <property type="match status" value="2"/>
</dbReference>
<dbReference type="SUPFAM" id="SSF55120">
    <property type="entry name" value="Pseudouridine synthase"/>
    <property type="match status" value="1"/>
</dbReference>
<dbReference type="PROSITE" id="PS50984">
    <property type="entry name" value="TRUD"/>
    <property type="match status" value="1"/>
</dbReference>
<dbReference type="PROSITE" id="PS01268">
    <property type="entry name" value="UPF0024"/>
    <property type="match status" value="1"/>
</dbReference>
<feature type="chain" id="PRO_1000149848" description="tRNA pseudouridine synthase D">
    <location>
        <begin position="1"/>
        <end position="349"/>
    </location>
</feature>
<feature type="domain" description="TRUD" evidence="1">
    <location>
        <begin position="155"/>
        <end position="303"/>
    </location>
</feature>
<feature type="active site" description="Nucleophile" evidence="1">
    <location>
        <position position="80"/>
    </location>
</feature>
<feature type="binding site" evidence="1">
    <location>
        <position position="27"/>
    </location>
    <ligand>
        <name>substrate</name>
    </ligand>
</feature>
<feature type="binding site" evidence="1">
    <location>
        <position position="129"/>
    </location>
    <ligand>
        <name>substrate</name>
    </ligand>
</feature>
<feature type="binding site" evidence="1">
    <location>
        <position position="329"/>
    </location>
    <ligand>
        <name>substrate</name>
    </ligand>
</feature>
<evidence type="ECO:0000255" key="1">
    <source>
        <dbReference type="HAMAP-Rule" id="MF_01082"/>
    </source>
</evidence>
<gene>
    <name evidence="1" type="primary">truD</name>
    <name type="ordered locus">SPC_2971</name>
</gene>
<name>TRUD_SALPC</name>
<comment type="function">
    <text evidence="1">Responsible for synthesis of pseudouridine from uracil-13 in transfer RNAs.</text>
</comment>
<comment type="catalytic activity">
    <reaction evidence="1">
        <text>uridine(13) in tRNA = pseudouridine(13) in tRNA</text>
        <dbReference type="Rhea" id="RHEA:42540"/>
        <dbReference type="Rhea" id="RHEA-COMP:10105"/>
        <dbReference type="Rhea" id="RHEA-COMP:10106"/>
        <dbReference type="ChEBI" id="CHEBI:65314"/>
        <dbReference type="ChEBI" id="CHEBI:65315"/>
        <dbReference type="EC" id="5.4.99.27"/>
    </reaction>
</comment>
<comment type="similarity">
    <text evidence="1">Belongs to the pseudouridine synthase TruD family.</text>
</comment>
<sequence>MTEFDNLTWLHGKPQGSGLLKANPEDFVVVEDLGFTPDGEGEHILLRILKNGCNTRFVADALAKFLKIHAREVSFAGQKDKHAVTEQWLCARVPGKEMPDFSAFQLEGCKVLEYARHKRKLRLGALKGNAFTLVLREISDRRDVETRLQAIRDGGVPNYFGAQRFGIGGSNLQGALRWAQSNAPVRDRNKRSFWLSAARSALFNQIVHQRLKKPDFNQVVDGDALQLAGRGSWFVATSEELPELQRRVDEKELMITASLPGSGEWGTQRAALAFEQDAIAQETVLQSLLLREKVEASRRAMLLYPQQLSWNWWDDVTVELRFWLPAGSFATSVVRELINTMGDYAHIAE</sequence>
<proteinExistence type="inferred from homology"/>
<protein>
    <recommendedName>
        <fullName evidence="1">tRNA pseudouridine synthase D</fullName>
        <ecNumber evidence="1">5.4.99.27</ecNumber>
    </recommendedName>
    <alternativeName>
        <fullName evidence="1">tRNA pseudouridine(13) synthase</fullName>
    </alternativeName>
    <alternativeName>
        <fullName evidence="1">tRNA pseudouridylate synthase D</fullName>
    </alternativeName>
    <alternativeName>
        <fullName evidence="1">tRNA-uridine isomerase D</fullName>
    </alternativeName>
</protein>